<organism>
    <name type="scientific">Rhizobium johnstonii (strain DSM 114642 / LMG 32736 / 3841)</name>
    <name type="common">Rhizobium leguminosarum bv. viciae</name>
    <dbReference type="NCBI Taxonomy" id="216596"/>
    <lineage>
        <taxon>Bacteria</taxon>
        <taxon>Pseudomonadati</taxon>
        <taxon>Pseudomonadota</taxon>
        <taxon>Alphaproteobacteria</taxon>
        <taxon>Hyphomicrobiales</taxon>
        <taxon>Rhizobiaceae</taxon>
        <taxon>Rhizobium/Agrobacterium group</taxon>
        <taxon>Rhizobium</taxon>
        <taxon>Rhizobium johnstonii</taxon>
    </lineage>
</organism>
<proteinExistence type="inferred from homology"/>
<accession>Q1MAC5</accession>
<dbReference type="EC" id="1.17.7.3" evidence="1"/>
<dbReference type="EMBL" id="AM236080">
    <property type="protein sequence ID" value="CAK10113.1"/>
    <property type="molecule type" value="Genomic_DNA"/>
</dbReference>
<dbReference type="RefSeq" id="WP_011653977.1">
    <property type="nucleotide sequence ID" value="NC_008380.1"/>
</dbReference>
<dbReference type="SMR" id="Q1MAC5"/>
<dbReference type="EnsemblBacteria" id="CAK10113">
    <property type="protein sequence ID" value="CAK10113"/>
    <property type="gene ID" value="RL4630"/>
</dbReference>
<dbReference type="KEGG" id="rle:RL4630"/>
<dbReference type="eggNOG" id="COG0821">
    <property type="taxonomic scope" value="Bacteria"/>
</dbReference>
<dbReference type="HOGENOM" id="CLU_042258_1_0_5"/>
<dbReference type="UniPathway" id="UPA00056">
    <property type="reaction ID" value="UER00096"/>
</dbReference>
<dbReference type="Proteomes" id="UP000006575">
    <property type="component" value="Chromosome"/>
</dbReference>
<dbReference type="GO" id="GO:0051539">
    <property type="term" value="F:4 iron, 4 sulfur cluster binding"/>
    <property type="evidence" value="ECO:0007669"/>
    <property type="project" value="UniProtKB-UniRule"/>
</dbReference>
<dbReference type="GO" id="GO:0046429">
    <property type="term" value="F:4-hydroxy-3-methylbut-2-en-1-yl diphosphate synthase activity (ferredoxin)"/>
    <property type="evidence" value="ECO:0007669"/>
    <property type="project" value="UniProtKB-UniRule"/>
</dbReference>
<dbReference type="GO" id="GO:0141197">
    <property type="term" value="F:4-hydroxy-3-methylbut-2-enyl-diphosphate synthase activity (flavodoxin)"/>
    <property type="evidence" value="ECO:0007669"/>
    <property type="project" value="UniProtKB-EC"/>
</dbReference>
<dbReference type="GO" id="GO:0005506">
    <property type="term" value="F:iron ion binding"/>
    <property type="evidence" value="ECO:0007669"/>
    <property type="project" value="InterPro"/>
</dbReference>
<dbReference type="GO" id="GO:0019288">
    <property type="term" value="P:isopentenyl diphosphate biosynthetic process, methylerythritol 4-phosphate pathway"/>
    <property type="evidence" value="ECO:0007669"/>
    <property type="project" value="UniProtKB-UniRule"/>
</dbReference>
<dbReference type="GO" id="GO:0016114">
    <property type="term" value="P:terpenoid biosynthetic process"/>
    <property type="evidence" value="ECO:0007669"/>
    <property type="project" value="InterPro"/>
</dbReference>
<dbReference type="FunFam" id="3.30.413.10:FF:000012">
    <property type="entry name" value="4-hydroxy-3-methylbut-2-en-1-yl diphosphate synthase (flavodoxin)"/>
    <property type="match status" value="1"/>
</dbReference>
<dbReference type="Gene3D" id="3.20.20.20">
    <property type="entry name" value="Dihydropteroate synthase-like"/>
    <property type="match status" value="1"/>
</dbReference>
<dbReference type="Gene3D" id="3.30.413.10">
    <property type="entry name" value="Sulfite Reductase Hemoprotein, domain 1"/>
    <property type="match status" value="1"/>
</dbReference>
<dbReference type="HAMAP" id="MF_00159">
    <property type="entry name" value="IspG"/>
    <property type="match status" value="1"/>
</dbReference>
<dbReference type="InterPro" id="IPR011005">
    <property type="entry name" value="Dihydropteroate_synth-like_sf"/>
</dbReference>
<dbReference type="InterPro" id="IPR016425">
    <property type="entry name" value="IspG_bac"/>
</dbReference>
<dbReference type="InterPro" id="IPR004588">
    <property type="entry name" value="IspG_bac-typ"/>
</dbReference>
<dbReference type="InterPro" id="IPR045854">
    <property type="entry name" value="NO2/SO3_Rdtase_4Fe4S_sf"/>
</dbReference>
<dbReference type="NCBIfam" id="TIGR00612">
    <property type="entry name" value="ispG_gcpE"/>
    <property type="match status" value="1"/>
</dbReference>
<dbReference type="NCBIfam" id="NF001540">
    <property type="entry name" value="PRK00366.1"/>
    <property type="match status" value="1"/>
</dbReference>
<dbReference type="PANTHER" id="PTHR30454">
    <property type="entry name" value="4-HYDROXY-3-METHYLBUT-2-EN-1-YL DIPHOSPHATE SYNTHASE"/>
    <property type="match status" value="1"/>
</dbReference>
<dbReference type="PANTHER" id="PTHR30454:SF0">
    <property type="entry name" value="4-HYDROXY-3-METHYLBUT-2-EN-1-YL DIPHOSPHATE SYNTHASE (FERREDOXIN), CHLOROPLASTIC"/>
    <property type="match status" value="1"/>
</dbReference>
<dbReference type="Pfam" id="PF04551">
    <property type="entry name" value="GcpE"/>
    <property type="match status" value="1"/>
</dbReference>
<dbReference type="PIRSF" id="PIRSF004640">
    <property type="entry name" value="IspG"/>
    <property type="match status" value="1"/>
</dbReference>
<dbReference type="SUPFAM" id="SSF56014">
    <property type="entry name" value="Nitrite and sulphite reductase 4Fe-4S domain-like"/>
    <property type="match status" value="1"/>
</dbReference>
<feature type="chain" id="PRO_1000011507" description="4-hydroxy-3-methylbut-2-en-1-yl diphosphate synthase (flavodoxin)">
    <location>
        <begin position="1"/>
        <end position="416"/>
    </location>
</feature>
<feature type="binding site" evidence="1">
    <location>
        <position position="304"/>
    </location>
    <ligand>
        <name>[4Fe-4S] cluster</name>
        <dbReference type="ChEBI" id="CHEBI:49883"/>
    </ligand>
</feature>
<feature type="binding site" evidence="1">
    <location>
        <position position="307"/>
    </location>
    <ligand>
        <name>[4Fe-4S] cluster</name>
        <dbReference type="ChEBI" id="CHEBI:49883"/>
    </ligand>
</feature>
<feature type="binding site" evidence="1">
    <location>
        <position position="350"/>
    </location>
    <ligand>
        <name>[4Fe-4S] cluster</name>
        <dbReference type="ChEBI" id="CHEBI:49883"/>
    </ligand>
</feature>
<feature type="binding site" evidence="1">
    <location>
        <position position="357"/>
    </location>
    <ligand>
        <name>[4Fe-4S] cluster</name>
        <dbReference type="ChEBI" id="CHEBI:49883"/>
    </ligand>
</feature>
<protein>
    <recommendedName>
        <fullName evidence="1">4-hydroxy-3-methylbut-2-en-1-yl diphosphate synthase (flavodoxin)</fullName>
        <ecNumber evidence="1">1.17.7.3</ecNumber>
    </recommendedName>
    <alternativeName>
        <fullName evidence="1">1-hydroxy-2-methyl-2-(E)-butenyl 4-diphosphate synthase</fullName>
    </alternativeName>
</protein>
<comment type="function">
    <text evidence="1">Converts 2C-methyl-D-erythritol 2,4-cyclodiphosphate (ME-2,4cPP) into 1-hydroxy-2-methyl-2-(E)-butenyl 4-diphosphate.</text>
</comment>
<comment type="catalytic activity">
    <reaction evidence="1">
        <text>(2E)-4-hydroxy-3-methylbut-2-enyl diphosphate + oxidized [flavodoxin] + H2O + 2 H(+) = 2-C-methyl-D-erythritol 2,4-cyclic diphosphate + reduced [flavodoxin]</text>
        <dbReference type="Rhea" id="RHEA:43604"/>
        <dbReference type="Rhea" id="RHEA-COMP:10622"/>
        <dbReference type="Rhea" id="RHEA-COMP:10623"/>
        <dbReference type="ChEBI" id="CHEBI:15377"/>
        <dbReference type="ChEBI" id="CHEBI:15378"/>
        <dbReference type="ChEBI" id="CHEBI:57618"/>
        <dbReference type="ChEBI" id="CHEBI:58210"/>
        <dbReference type="ChEBI" id="CHEBI:58483"/>
        <dbReference type="ChEBI" id="CHEBI:128753"/>
        <dbReference type="EC" id="1.17.7.3"/>
    </reaction>
</comment>
<comment type="cofactor">
    <cofactor evidence="1">
        <name>[4Fe-4S] cluster</name>
        <dbReference type="ChEBI" id="CHEBI:49883"/>
    </cofactor>
    <text evidence="1">Binds 1 [4Fe-4S] cluster.</text>
</comment>
<comment type="pathway">
    <text evidence="1">Isoprenoid biosynthesis; isopentenyl diphosphate biosynthesis via DXP pathway; isopentenyl diphosphate from 1-deoxy-D-xylulose 5-phosphate: step 5/6.</text>
</comment>
<comment type="similarity">
    <text evidence="1">Belongs to the IspG family.</text>
</comment>
<keyword id="KW-0004">4Fe-4S</keyword>
<keyword id="KW-0408">Iron</keyword>
<keyword id="KW-0411">Iron-sulfur</keyword>
<keyword id="KW-0414">Isoprene biosynthesis</keyword>
<keyword id="KW-0479">Metal-binding</keyword>
<keyword id="KW-0560">Oxidoreductase</keyword>
<gene>
    <name evidence="1" type="primary">ispG</name>
    <name type="ordered locus">RL4630</name>
</gene>
<evidence type="ECO:0000255" key="1">
    <source>
        <dbReference type="HAMAP-Rule" id="MF_00159"/>
    </source>
</evidence>
<reference key="1">
    <citation type="journal article" date="2006" name="Genome Biol.">
        <title>The genome of Rhizobium leguminosarum has recognizable core and accessory components.</title>
        <authorList>
            <person name="Young J.P.W."/>
            <person name="Crossman L.C."/>
            <person name="Johnston A.W.B."/>
            <person name="Thomson N.R."/>
            <person name="Ghazoui Z.F."/>
            <person name="Hull K.H."/>
            <person name="Wexler M."/>
            <person name="Curson A.R.J."/>
            <person name="Todd J.D."/>
            <person name="Poole P.S."/>
            <person name="Mauchline T.H."/>
            <person name="East A.K."/>
            <person name="Quail M.A."/>
            <person name="Churcher C."/>
            <person name="Arrowsmith C."/>
            <person name="Cherevach I."/>
            <person name="Chillingworth T."/>
            <person name="Clarke K."/>
            <person name="Cronin A."/>
            <person name="Davis P."/>
            <person name="Fraser A."/>
            <person name="Hance Z."/>
            <person name="Hauser H."/>
            <person name="Jagels K."/>
            <person name="Moule S."/>
            <person name="Mungall K."/>
            <person name="Norbertczak H."/>
            <person name="Rabbinowitsch E."/>
            <person name="Sanders M."/>
            <person name="Simmonds M."/>
            <person name="Whitehead S."/>
            <person name="Parkhill J."/>
        </authorList>
    </citation>
    <scope>NUCLEOTIDE SEQUENCE [LARGE SCALE GENOMIC DNA]</scope>
    <source>
        <strain>DSM 114642 / LMG 32736 / 3841</strain>
    </source>
</reference>
<sequence>MLSAADFDPKPRRASVAVDVGGVIVGGGAPVVVQSMTNTDTADIDSTVAQVAALHRAGSELVRITVDRDESAAAVPKIRERLLRLGMDVPLIGDFHYIGHKLLADHPDCAEALAKYRINPGNVGFKDKKDKQFAEIIEMAIRYDKPVRIGVNWGSLDQDLLTALMDRNAEAGSPLSARQVTREAIVQSALLSAALAEEIGLPRNRIILSAKVSQVQDLIAVNSILAERSNHALHLGLTEAGMGTKGIVASSAAMGFVLQHGIGDTIRVSLTPEPNGDRTREVQVAQEILQVMGFRQFIPVVAACPGCGRTTSTVFQELAQNIQNDIRKNMPVWREKYPGVEALNVAVMGCIVNGPGESKHADIGISLPGTGETPAAPVFIDGRKALTLRGPNIAADFEALVVDYIEKRFGQRTAAE</sequence>
<name>ISPG_RHIJ3</name>